<organism>
    <name type="scientific">Escherichia coli (strain K12 / DH10B)</name>
    <dbReference type="NCBI Taxonomy" id="316385"/>
    <lineage>
        <taxon>Bacteria</taxon>
        <taxon>Pseudomonadati</taxon>
        <taxon>Pseudomonadota</taxon>
        <taxon>Gammaproteobacteria</taxon>
        <taxon>Enterobacterales</taxon>
        <taxon>Enterobacteriaceae</taxon>
        <taxon>Escherichia</taxon>
    </lineage>
</organism>
<name>ASNA_ECODH</name>
<dbReference type="EC" id="6.3.1.1" evidence="1"/>
<dbReference type="EMBL" id="CP000948">
    <property type="protein sequence ID" value="ACB04787.1"/>
    <property type="molecule type" value="Genomic_DNA"/>
</dbReference>
<dbReference type="RefSeq" id="WP_000845104.1">
    <property type="nucleotide sequence ID" value="NC_010473.1"/>
</dbReference>
<dbReference type="SMR" id="B1X9X2"/>
<dbReference type="KEGG" id="ecd:ECDH10B_3932"/>
<dbReference type="HOGENOM" id="CLU_071543_0_0_6"/>
<dbReference type="UniPathway" id="UPA00134">
    <property type="reaction ID" value="UER00194"/>
</dbReference>
<dbReference type="GO" id="GO:0005829">
    <property type="term" value="C:cytosol"/>
    <property type="evidence" value="ECO:0007669"/>
    <property type="project" value="TreeGrafter"/>
</dbReference>
<dbReference type="GO" id="GO:0004071">
    <property type="term" value="F:aspartate-ammonia ligase activity"/>
    <property type="evidence" value="ECO:0007669"/>
    <property type="project" value="UniProtKB-UniRule"/>
</dbReference>
<dbReference type="GO" id="GO:0005524">
    <property type="term" value="F:ATP binding"/>
    <property type="evidence" value="ECO:0007669"/>
    <property type="project" value="UniProtKB-UniRule"/>
</dbReference>
<dbReference type="GO" id="GO:0070981">
    <property type="term" value="P:L-asparagine biosynthetic process"/>
    <property type="evidence" value="ECO:0007669"/>
    <property type="project" value="UniProtKB-UniRule"/>
</dbReference>
<dbReference type="CDD" id="cd00645">
    <property type="entry name" value="AsnA"/>
    <property type="match status" value="1"/>
</dbReference>
<dbReference type="FunFam" id="3.30.930.10:FF:000025">
    <property type="entry name" value="Aspartate--ammonia ligase"/>
    <property type="match status" value="1"/>
</dbReference>
<dbReference type="Gene3D" id="3.30.930.10">
    <property type="entry name" value="Bira Bifunctional Protein, Domain 2"/>
    <property type="match status" value="1"/>
</dbReference>
<dbReference type="HAMAP" id="MF_00555">
    <property type="entry name" value="AsnA"/>
    <property type="match status" value="1"/>
</dbReference>
<dbReference type="InterPro" id="IPR006195">
    <property type="entry name" value="aa-tRNA-synth_II"/>
</dbReference>
<dbReference type="InterPro" id="IPR045864">
    <property type="entry name" value="aa-tRNA-synth_II/BPL/LPL"/>
</dbReference>
<dbReference type="InterPro" id="IPR004618">
    <property type="entry name" value="AsnA"/>
</dbReference>
<dbReference type="NCBIfam" id="TIGR00669">
    <property type="entry name" value="asnA"/>
    <property type="match status" value="1"/>
</dbReference>
<dbReference type="PANTHER" id="PTHR30073">
    <property type="entry name" value="ASPARTATE--AMMONIA LIGASE"/>
    <property type="match status" value="1"/>
</dbReference>
<dbReference type="PANTHER" id="PTHR30073:SF5">
    <property type="entry name" value="ASPARTATE--AMMONIA LIGASE"/>
    <property type="match status" value="1"/>
</dbReference>
<dbReference type="Pfam" id="PF03590">
    <property type="entry name" value="AsnA"/>
    <property type="match status" value="1"/>
</dbReference>
<dbReference type="PIRSF" id="PIRSF001555">
    <property type="entry name" value="Asp_ammon_ligase"/>
    <property type="match status" value="1"/>
</dbReference>
<dbReference type="SUPFAM" id="SSF55681">
    <property type="entry name" value="Class II aaRS and biotin synthetases"/>
    <property type="match status" value="1"/>
</dbReference>
<dbReference type="PROSITE" id="PS50862">
    <property type="entry name" value="AA_TRNA_LIGASE_II"/>
    <property type="match status" value="1"/>
</dbReference>
<reference key="1">
    <citation type="journal article" date="2008" name="J. Bacteriol.">
        <title>The complete genome sequence of Escherichia coli DH10B: insights into the biology of a laboratory workhorse.</title>
        <authorList>
            <person name="Durfee T."/>
            <person name="Nelson R."/>
            <person name="Baldwin S."/>
            <person name="Plunkett G. III"/>
            <person name="Burland V."/>
            <person name="Mau B."/>
            <person name="Petrosino J.F."/>
            <person name="Qin X."/>
            <person name="Muzny D.M."/>
            <person name="Ayele M."/>
            <person name="Gibbs R.A."/>
            <person name="Csorgo B."/>
            <person name="Posfai G."/>
            <person name="Weinstock G.M."/>
            <person name="Blattner F.R."/>
        </authorList>
    </citation>
    <scope>NUCLEOTIDE SEQUENCE [LARGE SCALE GENOMIC DNA]</scope>
    <source>
        <strain>K12 / DH10B</strain>
    </source>
</reference>
<accession>B1X9X2</accession>
<feature type="chain" id="PRO_1000129115" description="Aspartate--ammonia ligase">
    <location>
        <begin position="1"/>
        <end position="330"/>
    </location>
</feature>
<sequence length="330" mass="36651">MKTAYIAKQRQISFVKSHFSRQLEERLGLIEVQAPILSRVGDGTQDNLSGCEKAVQVKVKALPDAQFEVVHSLAKWKRQTLGQHDFSAGEGLYTHMKALRPDEDRLSPLHSVYVDQWDWERVMGDGERQFSTLKSTVEAIWAGIKATEAAVSEEFGLAPFLPDQIHFVHSQELLSRYPDLDAKGRERAIAKDLGAVFLVGIGGKLSDGHRHDVRAPDYDDWSTPSELGHAGLNGDILVWNPVLEDAFELSSMGIRVDADTLKHQLALTGDEDRLELEWHQALLRGEMPQTIGGGIGQSRLTMLLLQLPHIGQVQCGVWPAAVRESVPSLL</sequence>
<evidence type="ECO:0000255" key="1">
    <source>
        <dbReference type="HAMAP-Rule" id="MF_00555"/>
    </source>
</evidence>
<comment type="catalytic activity">
    <reaction evidence="1">
        <text>L-aspartate + NH4(+) + ATP = L-asparagine + AMP + diphosphate + H(+)</text>
        <dbReference type="Rhea" id="RHEA:11372"/>
        <dbReference type="ChEBI" id="CHEBI:15378"/>
        <dbReference type="ChEBI" id="CHEBI:28938"/>
        <dbReference type="ChEBI" id="CHEBI:29991"/>
        <dbReference type="ChEBI" id="CHEBI:30616"/>
        <dbReference type="ChEBI" id="CHEBI:33019"/>
        <dbReference type="ChEBI" id="CHEBI:58048"/>
        <dbReference type="ChEBI" id="CHEBI:456215"/>
        <dbReference type="EC" id="6.3.1.1"/>
    </reaction>
</comment>
<comment type="pathway">
    <text evidence="1">Amino-acid biosynthesis; L-asparagine biosynthesis; L-asparagine from L-aspartate (ammonia route): step 1/1.</text>
</comment>
<comment type="subcellular location">
    <subcellularLocation>
        <location evidence="1">Cytoplasm</location>
    </subcellularLocation>
</comment>
<comment type="similarity">
    <text evidence="1">Belongs to the class-II aminoacyl-tRNA synthetase family. AsnA subfamily.</text>
</comment>
<protein>
    <recommendedName>
        <fullName evidence="1">Aspartate--ammonia ligase</fullName>
        <ecNumber evidence="1">6.3.1.1</ecNumber>
    </recommendedName>
    <alternativeName>
        <fullName evidence="1">Asparagine synthetase A</fullName>
    </alternativeName>
</protein>
<proteinExistence type="inferred from homology"/>
<gene>
    <name evidence="1" type="primary">asnA</name>
    <name type="ordered locus">ECDH10B_3932</name>
</gene>
<keyword id="KW-0028">Amino-acid biosynthesis</keyword>
<keyword id="KW-0061">Asparagine biosynthesis</keyword>
<keyword id="KW-0067">ATP-binding</keyword>
<keyword id="KW-0963">Cytoplasm</keyword>
<keyword id="KW-0436">Ligase</keyword>
<keyword id="KW-0547">Nucleotide-binding</keyword>